<comment type="function">
    <text evidence="1">An aminoacyl-tRNA editing enzyme that deacylates mischarged D-aminoacyl-tRNAs. Also deacylates mischarged glycyl-tRNA(Ala), protecting cells against glycine mischarging by AlaRS. Acts via tRNA-based rather than protein-based catalysis; rejects L-amino acids rather than detecting D-amino acids in the active site. By recycling D-aminoacyl-tRNA to D-amino acids and free tRNA molecules, this enzyme counteracts the toxicity associated with the formation of D-aminoacyl-tRNA entities in vivo and helps enforce protein L-homochirality.</text>
</comment>
<comment type="catalytic activity">
    <reaction evidence="1">
        <text>glycyl-tRNA(Ala) + H2O = tRNA(Ala) + glycine + H(+)</text>
        <dbReference type="Rhea" id="RHEA:53744"/>
        <dbReference type="Rhea" id="RHEA-COMP:9657"/>
        <dbReference type="Rhea" id="RHEA-COMP:13640"/>
        <dbReference type="ChEBI" id="CHEBI:15377"/>
        <dbReference type="ChEBI" id="CHEBI:15378"/>
        <dbReference type="ChEBI" id="CHEBI:57305"/>
        <dbReference type="ChEBI" id="CHEBI:78442"/>
        <dbReference type="ChEBI" id="CHEBI:78522"/>
        <dbReference type="EC" id="3.1.1.96"/>
    </reaction>
</comment>
<comment type="catalytic activity">
    <reaction evidence="1">
        <text>a D-aminoacyl-tRNA + H2O = a tRNA + a D-alpha-amino acid + H(+)</text>
        <dbReference type="Rhea" id="RHEA:13953"/>
        <dbReference type="Rhea" id="RHEA-COMP:10123"/>
        <dbReference type="Rhea" id="RHEA-COMP:10124"/>
        <dbReference type="ChEBI" id="CHEBI:15377"/>
        <dbReference type="ChEBI" id="CHEBI:15378"/>
        <dbReference type="ChEBI" id="CHEBI:59871"/>
        <dbReference type="ChEBI" id="CHEBI:78442"/>
        <dbReference type="ChEBI" id="CHEBI:79333"/>
        <dbReference type="EC" id="3.1.1.96"/>
    </reaction>
</comment>
<comment type="subunit">
    <text evidence="1">Homodimer.</text>
</comment>
<comment type="subcellular location">
    <subcellularLocation>
        <location evidence="1">Cytoplasm</location>
    </subcellularLocation>
</comment>
<comment type="domain">
    <text evidence="1">A Gly-cisPro motif from one monomer fits into the active site of the other monomer to allow specific chiral rejection of L-amino acids.</text>
</comment>
<comment type="similarity">
    <text evidence="1">Belongs to the DTD family.</text>
</comment>
<gene>
    <name evidence="1" type="primary">dtd</name>
    <name type="ordered locus">Dhaf_3608</name>
</gene>
<dbReference type="EC" id="3.1.1.96" evidence="1"/>
<dbReference type="EMBL" id="CP001336">
    <property type="protein sequence ID" value="ACL21625.1"/>
    <property type="molecule type" value="Genomic_DNA"/>
</dbReference>
<dbReference type="RefSeq" id="WP_011460350.1">
    <property type="nucleotide sequence ID" value="NC_011830.1"/>
</dbReference>
<dbReference type="SMR" id="B8FQT8"/>
<dbReference type="KEGG" id="dhd:Dhaf_3608"/>
<dbReference type="HOGENOM" id="CLU_076901_1_0_9"/>
<dbReference type="Proteomes" id="UP000007726">
    <property type="component" value="Chromosome"/>
</dbReference>
<dbReference type="GO" id="GO:0005737">
    <property type="term" value="C:cytoplasm"/>
    <property type="evidence" value="ECO:0007669"/>
    <property type="project" value="UniProtKB-SubCell"/>
</dbReference>
<dbReference type="GO" id="GO:0051500">
    <property type="term" value="F:D-tyrosyl-tRNA(Tyr) deacylase activity"/>
    <property type="evidence" value="ECO:0007669"/>
    <property type="project" value="TreeGrafter"/>
</dbReference>
<dbReference type="GO" id="GO:0106026">
    <property type="term" value="F:Gly-tRNA(Ala) deacylase activity"/>
    <property type="evidence" value="ECO:0007669"/>
    <property type="project" value="UniProtKB-UniRule"/>
</dbReference>
<dbReference type="GO" id="GO:0043908">
    <property type="term" value="F:Ser(Gly)-tRNA(Ala) hydrolase activity"/>
    <property type="evidence" value="ECO:0007669"/>
    <property type="project" value="UniProtKB-UniRule"/>
</dbReference>
<dbReference type="GO" id="GO:0000049">
    <property type="term" value="F:tRNA binding"/>
    <property type="evidence" value="ECO:0007669"/>
    <property type="project" value="UniProtKB-UniRule"/>
</dbReference>
<dbReference type="GO" id="GO:0019478">
    <property type="term" value="P:D-amino acid catabolic process"/>
    <property type="evidence" value="ECO:0007669"/>
    <property type="project" value="UniProtKB-UniRule"/>
</dbReference>
<dbReference type="CDD" id="cd00563">
    <property type="entry name" value="Dtyr_deacylase"/>
    <property type="match status" value="1"/>
</dbReference>
<dbReference type="FunFam" id="3.50.80.10:FF:000001">
    <property type="entry name" value="D-aminoacyl-tRNA deacylase"/>
    <property type="match status" value="1"/>
</dbReference>
<dbReference type="Gene3D" id="3.50.80.10">
    <property type="entry name" value="D-tyrosyl-tRNA(Tyr) deacylase"/>
    <property type="match status" value="1"/>
</dbReference>
<dbReference type="HAMAP" id="MF_00518">
    <property type="entry name" value="Deacylase_Dtd"/>
    <property type="match status" value="1"/>
</dbReference>
<dbReference type="InterPro" id="IPR003732">
    <property type="entry name" value="Daa-tRNA_deacyls_DTD"/>
</dbReference>
<dbReference type="InterPro" id="IPR023509">
    <property type="entry name" value="DTD-like_sf"/>
</dbReference>
<dbReference type="NCBIfam" id="TIGR00256">
    <property type="entry name" value="D-aminoacyl-tRNA deacylase"/>
    <property type="match status" value="1"/>
</dbReference>
<dbReference type="PANTHER" id="PTHR10472:SF5">
    <property type="entry name" value="D-AMINOACYL-TRNA DEACYLASE 1"/>
    <property type="match status" value="1"/>
</dbReference>
<dbReference type="PANTHER" id="PTHR10472">
    <property type="entry name" value="D-TYROSYL-TRNA TYR DEACYLASE"/>
    <property type="match status" value="1"/>
</dbReference>
<dbReference type="Pfam" id="PF02580">
    <property type="entry name" value="Tyr_Deacylase"/>
    <property type="match status" value="1"/>
</dbReference>
<dbReference type="SUPFAM" id="SSF69500">
    <property type="entry name" value="DTD-like"/>
    <property type="match status" value="1"/>
</dbReference>
<protein>
    <recommendedName>
        <fullName evidence="1">D-aminoacyl-tRNA deacylase</fullName>
        <shortName evidence="1">DTD</shortName>
        <ecNumber evidence="1">3.1.1.96</ecNumber>
    </recommendedName>
    <alternativeName>
        <fullName evidence="1">Gly-tRNA(Ala) deacylase</fullName>
    </alternativeName>
</protein>
<sequence>MRSVVQRVTQASVTVEGEVVGRIGAGLLVLFGVGRGDTEADLNWMVDKIAGLRLFEDGEGKMNRSVQDVGGEILMVSQFTLYGDCRKGKRPSFATAAPPETAGELFQQAVAKMRGYGLHVETGVFQAEMQVALVNDGPVTLLIDSEKNF</sequence>
<reference key="1">
    <citation type="journal article" date="2012" name="BMC Microbiol.">
        <title>Genome sequence of Desulfitobacterium hafniense DCB-2, a Gram-positive anaerobe capable of dehalogenation and metal reduction.</title>
        <authorList>
            <person name="Kim S.H."/>
            <person name="Harzman C."/>
            <person name="Davis J.K."/>
            <person name="Hutcheson R."/>
            <person name="Broderick J.B."/>
            <person name="Marsh T.L."/>
            <person name="Tiedje J.M."/>
        </authorList>
    </citation>
    <scope>NUCLEOTIDE SEQUENCE [LARGE SCALE GENOMIC DNA]</scope>
    <source>
        <strain>DSM 10664 / DCB-2</strain>
    </source>
</reference>
<accession>B8FQT8</accession>
<name>DTD_DESHD</name>
<evidence type="ECO:0000255" key="1">
    <source>
        <dbReference type="HAMAP-Rule" id="MF_00518"/>
    </source>
</evidence>
<organism>
    <name type="scientific">Desulfitobacterium hafniense (strain DSM 10664 / DCB-2)</name>
    <dbReference type="NCBI Taxonomy" id="272564"/>
    <lineage>
        <taxon>Bacteria</taxon>
        <taxon>Bacillati</taxon>
        <taxon>Bacillota</taxon>
        <taxon>Clostridia</taxon>
        <taxon>Eubacteriales</taxon>
        <taxon>Desulfitobacteriaceae</taxon>
        <taxon>Desulfitobacterium</taxon>
    </lineage>
</organism>
<feature type="chain" id="PRO_1000146193" description="D-aminoacyl-tRNA deacylase">
    <location>
        <begin position="1"/>
        <end position="149"/>
    </location>
</feature>
<feature type="short sequence motif" description="Gly-cisPro motif, important for rejection of L-amino acids" evidence="1">
    <location>
        <begin position="137"/>
        <end position="138"/>
    </location>
</feature>
<proteinExistence type="inferred from homology"/>
<keyword id="KW-0963">Cytoplasm</keyword>
<keyword id="KW-0378">Hydrolase</keyword>
<keyword id="KW-0694">RNA-binding</keyword>
<keyword id="KW-0820">tRNA-binding</keyword>